<keyword id="KW-0067">ATP-binding</keyword>
<keyword id="KW-0963">Cytoplasm</keyword>
<keyword id="KW-0436">Ligase</keyword>
<keyword id="KW-0547">Nucleotide-binding</keyword>
<keyword id="KW-0658">Purine biosynthesis</keyword>
<dbReference type="EC" id="6.3.3.1" evidence="1"/>
<dbReference type="EMBL" id="CP000246">
    <property type="protein sequence ID" value="ABG84389.1"/>
    <property type="molecule type" value="Genomic_DNA"/>
</dbReference>
<dbReference type="RefSeq" id="WP_003468449.1">
    <property type="nucleotide sequence ID" value="NC_008261.1"/>
</dbReference>
<dbReference type="SMR" id="Q0TTB2"/>
<dbReference type="STRING" id="195103.CPF_0675"/>
<dbReference type="PaxDb" id="195103-CPF_0675"/>
<dbReference type="GeneID" id="93002979"/>
<dbReference type="KEGG" id="cpf:CPF_0675"/>
<dbReference type="eggNOG" id="COG0150">
    <property type="taxonomic scope" value="Bacteria"/>
</dbReference>
<dbReference type="HOGENOM" id="CLU_047116_0_0_9"/>
<dbReference type="UniPathway" id="UPA00074">
    <property type="reaction ID" value="UER00129"/>
</dbReference>
<dbReference type="Proteomes" id="UP000001823">
    <property type="component" value="Chromosome"/>
</dbReference>
<dbReference type="GO" id="GO:0005829">
    <property type="term" value="C:cytosol"/>
    <property type="evidence" value="ECO:0007669"/>
    <property type="project" value="TreeGrafter"/>
</dbReference>
<dbReference type="GO" id="GO:0005524">
    <property type="term" value="F:ATP binding"/>
    <property type="evidence" value="ECO:0007669"/>
    <property type="project" value="UniProtKB-KW"/>
</dbReference>
<dbReference type="GO" id="GO:0004637">
    <property type="term" value="F:phosphoribosylamine-glycine ligase activity"/>
    <property type="evidence" value="ECO:0007669"/>
    <property type="project" value="TreeGrafter"/>
</dbReference>
<dbReference type="GO" id="GO:0004641">
    <property type="term" value="F:phosphoribosylformylglycinamidine cyclo-ligase activity"/>
    <property type="evidence" value="ECO:0007669"/>
    <property type="project" value="UniProtKB-UniRule"/>
</dbReference>
<dbReference type="GO" id="GO:0006189">
    <property type="term" value="P:'de novo' IMP biosynthetic process"/>
    <property type="evidence" value="ECO:0007669"/>
    <property type="project" value="UniProtKB-UniRule"/>
</dbReference>
<dbReference type="GO" id="GO:0046084">
    <property type="term" value="P:adenine biosynthetic process"/>
    <property type="evidence" value="ECO:0007669"/>
    <property type="project" value="TreeGrafter"/>
</dbReference>
<dbReference type="CDD" id="cd02196">
    <property type="entry name" value="PurM"/>
    <property type="match status" value="1"/>
</dbReference>
<dbReference type="FunFam" id="3.30.1330.10:FF:000001">
    <property type="entry name" value="Phosphoribosylformylglycinamidine cyclo-ligase"/>
    <property type="match status" value="1"/>
</dbReference>
<dbReference type="FunFam" id="3.90.650.10:FF:000011">
    <property type="entry name" value="Phosphoribosylformylglycinamidine cyclo-ligase"/>
    <property type="match status" value="1"/>
</dbReference>
<dbReference type="Gene3D" id="3.90.650.10">
    <property type="entry name" value="PurM-like C-terminal domain"/>
    <property type="match status" value="1"/>
</dbReference>
<dbReference type="Gene3D" id="3.30.1330.10">
    <property type="entry name" value="PurM-like, N-terminal domain"/>
    <property type="match status" value="1"/>
</dbReference>
<dbReference type="HAMAP" id="MF_00741">
    <property type="entry name" value="AIRS"/>
    <property type="match status" value="1"/>
</dbReference>
<dbReference type="InterPro" id="IPR010918">
    <property type="entry name" value="PurM-like_C_dom"/>
</dbReference>
<dbReference type="InterPro" id="IPR036676">
    <property type="entry name" value="PurM-like_C_sf"/>
</dbReference>
<dbReference type="InterPro" id="IPR016188">
    <property type="entry name" value="PurM-like_N"/>
</dbReference>
<dbReference type="InterPro" id="IPR036921">
    <property type="entry name" value="PurM-like_N_sf"/>
</dbReference>
<dbReference type="InterPro" id="IPR004733">
    <property type="entry name" value="PurM_cligase"/>
</dbReference>
<dbReference type="NCBIfam" id="TIGR00878">
    <property type="entry name" value="purM"/>
    <property type="match status" value="1"/>
</dbReference>
<dbReference type="PANTHER" id="PTHR10520:SF12">
    <property type="entry name" value="TRIFUNCTIONAL PURINE BIOSYNTHETIC PROTEIN ADENOSINE-3"/>
    <property type="match status" value="1"/>
</dbReference>
<dbReference type="PANTHER" id="PTHR10520">
    <property type="entry name" value="TRIFUNCTIONAL PURINE BIOSYNTHETIC PROTEIN ADENOSINE-3-RELATED"/>
    <property type="match status" value="1"/>
</dbReference>
<dbReference type="Pfam" id="PF00586">
    <property type="entry name" value="AIRS"/>
    <property type="match status" value="1"/>
</dbReference>
<dbReference type="Pfam" id="PF02769">
    <property type="entry name" value="AIRS_C"/>
    <property type="match status" value="1"/>
</dbReference>
<dbReference type="SUPFAM" id="SSF56042">
    <property type="entry name" value="PurM C-terminal domain-like"/>
    <property type="match status" value="1"/>
</dbReference>
<dbReference type="SUPFAM" id="SSF55326">
    <property type="entry name" value="PurM N-terminal domain-like"/>
    <property type="match status" value="1"/>
</dbReference>
<evidence type="ECO:0000255" key="1">
    <source>
        <dbReference type="HAMAP-Rule" id="MF_00741"/>
    </source>
</evidence>
<feature type="chain" id="PRO_0000258347" description="Phosphoribosylformylglycinamidine cyclo-ligase">
    <location>
        <begin position="1"/>
        <end position="333"/>
    </location>
</feature>
<reference key="1">
    <citation type="journal article" date="2006" name="Genome Res.">
        <title>Skewed genomic variability in strains of the toxigenic bacterial pathogen, Clostridium perfringens.</title>
        <authorList>
            <person name="Myers G.S.A."/>
            <person name="Rasko D.A."/>
            <person name="Cheung J.K."/>
            <person name="Ravel J."/>
            <person name="Seshadri R."/>
            <person name="DeBoy R.T."/>
            <person name="Ren Q."/>
            <person name="Varga J."/>
            <person name="Awad M.M."/>
            <person name="Brinkac L.M."/>
            <person name="Daugherty S.C."/>
            <person name="Haft D.H."/>
            <person name="Dodson R.J."/>
            <person name="Madupu R."/>
            <person name="Nelson W.C."/>
            <person name="Rosovitz M.J."/>
            <person name="Sullivan S.A."/>
            <person name="Khouri H."/>
            <person name="Dimitrov G.I."/>
            <person name="Watkins K.L."/>
            <person name="Mulligan S."/>
            <person name="Benton J."/>
            <person name="Radune D."/>
            <person name="Fisher D.J."/>
            <person name="Atkins H.S."/>
            <person name="Hiscox T."/>
            <person name="Jost B.H."/>
            <person name="Billington S.J."/>
            <person name="Songer J.G."/>
            <person name="McClane B.A."/>
            <person name="Titball R.W."/>
            <person name="Rood J.I."/>
            <person name="Melville S.B."/>
            <person name="Paulsen I.T."/>
        </authorList>
    </citation>
    <scope>NUCLEOTIDE SEQUENCE [LARGE SCALE GENOMIC DNA]</scope>
    <source>
        <strain>ATCC 13124 / DSM 756 / JCM 1290 / NCIMB 6125 / NCTC 8237 / S 107 / Type A</strain>
    </source>
</reference>
<name>PUR5_CLOP1</name>
<gene>
    <name evidence="1" type="primary">purM</name>
    <name type="ordered locus">CPF_0675</name>
</gene>
<organism>
    <name type="scientific">Clostridium perfringens (strain ATCC 13124 / DSM 756 / JCM 1290 / NCIMB 6125 / NCTC 8237 / Type A)</name>
    <dbReference type="NCBI Taxonomy" id="195103"/>
    <lineage>
        <taxon>Bacteria</taxon>
        <taxon>Bacillati</taxon>
        <taxon>Bacillota</taxon>
        <taxon>Clostridia</taxon>
        <taxon>Eubacteriales</taxon>
        <taxon>Clostridiaceae</taxon>
        <taxon>Clostridium</taxon>
    </lineage>
</organism>
<comment type="catalytic activity">
    <reaction evidence="1">
        <text>2-formamido-N(1)-(5-O-phospho-beta-D-ribosyl)acetamidine + ATP = 5-amino-1-(5-phospho-beta-D-ribosyl)imidazole + ADP + phosphate + H(+)</text>
        <dbReference type="Rhea" id="RHEA:23032"/>
        <dbReference type="ChEBI" id="CHEBI:15378"/>
        <dbReference type="ChEBI" id="CHEBI:30616"/>
        <dbReference type="ChEBI" id="CHEBI:43474"/>
        <dbReference type="ChEBI" id="CHEBI:137981"/>
        <dbReference type="ChEBI" id="CHEBI:147287"/>
        <dbReference type="ChEBI" id="CHEBI:456216"/>
        <dbReference type="EC" id="6.3.3.1"/>
    </reaction>
</comment>
<comment type="pathway">
    <text evidence="1">Purine metabolism; IMP biosynthesis via de novo pathway; 5-amino-1-(5-phospho-D-ribosyl)imidazole from N(2)-formyl-N(1)-(5-phospho-D-ribosyl)glycinamide: step 2/2.</text>
</comment>
<comment type="subcellular location">
    <subcellularLocation>
        <location evidence="1">Cytoplasm</location>
    </subcellularLocation>
</comment>
<comment type="similarity">
    <text evidence="1">Belongs to the AIR synthase family.</text>
</comment>
<accession>Q0TTB2</accession>
<proteinExistence type="inferred from homology"/>
<sequence>MLTYKEAGVNIEEGYRSVKLIKEYAKKTMSEYVLNGLGSFAGMVELPEGYKKPVLVSGTDGVGTKLDIACKKRKFDTVGIDCVAMCVNDILCHGAKPLFFLDYIACGKLEAEVSSDLVKGVAEGCIESQCSLIGGETAEMPGMYKEGDYDIAGFAVGIVDKDKIINGKDIKSGDKLIGIASSGVHSNGYSLIRKVFKNLDEDFNGKAIWEELLTPTKIYVKPVLSLLEKFNIKGMAHVTGGGFYENLPRMLSKEGLSIVINKNSYEIPEIFKKLMELGVKEEEMYNTFNMGIGFVLCVEEDEVEEVLKELSKQGEKAFEIGYINAGGEGVCIK</sequence>
<protein>
    <recommendedName>
        <fullName evidence="1">Phosphoribosylformylglycinamidine cyclo-ligase</fullName>
        <ecNumber evidence="1">6.3.3.1</ecNumber>
    </recommendedName>
    <alternativeName>
        <fullName evidence="1">AIR synthase</fullName>
    </alternativeName>
    <alternativeName>
        <fullName evidence="1">AIRS</fullName>
    </alternativeName>
    <alternativeName>
        <fullName evidence="1">Phosphoribosyl-aminoimidazole synthetase</fullName>
    </alternativeName>
</protein>